<dbReference type="EC" id="6.3.4.4" evidence="1"/>
<dbReference type="EMBL" id="CP001392">
    <property type="protein sequence ID" value="ACM32578.1"/>
    <property type="molecule type" value="Genomic_DNA"/>
</dbReference>
<dbReference type="RefSeq" id="WP_015912799.1">
    <property type="nucleotide sequence ID" value="NC_011992.1"/>
</dbReference>
<dbReference type="SMR" id="B9MFY7"/>
<dbReference type="KEGG" id="dia:Dtpsy_1101"/>
<dbReference type="eggNOG" id="COG0104">
    <property type="taxonomic scope" value="Bacteria"/>
</dbReference>
<dbReference type="HOGENOM" id="CLU_029848_0_0_4"/>
<dbReference type="UniPathway" id="UPA00075">
    <property type="reaction ID" value="UER00335"/>
</dbReference>
<dbReference type="Proteomes" id="UP000000450">
    <property type="component" value="Chromosome"/>
</dbReference>
<dbReference type="GO" id="GO:0005737">
    <property type="term" value="C:cytoplasm"/>
    <property type="evidence" value="ECO:0007669"/>
    <property type="project" value="UniProtKB-SubCell"/>
</dbReference>
<dbReference type="GO" id="GO:0004019">
    <property type="term" value="F:adenylosuccinate synthase activity"/>
    <property type="evidence" value="ECO:0007669"/>
    <property type="project" value="UniProtKB-UniRule"/>
</dbReference>
<dbReference type="GO" id="GO:0005525">
    <property type="term" value="F:GTP binding"/>
    <property type="evidence" value="ECO:0007669"/>
    <property type="project" value="UniProtKB-UniRule"/>
</dbReference>
<dbReference type="GO" id="GO:0000287">
    <property type="term" value="F:magnesium ion binding"/>
    <property type="evidence" value="ECO:0007669"/>
    <property type="project" value="UniProtKB-UniRule"/>
</dbReference>
<dbReference type="GO" id="GO:0044208">
    <property type="term" value="P:'de novo' AMP biosynthetic process"/>
    <property type="evidence" value="ECO:0007669"/>
    <property type="project" value="UniProtKB-UniRule"/>
</dbReference>
<dbReference type="GO" id="GO:0046040">
    <property type="term" value="P:IMP metabolic process"/>
    <property type="evidence" value="ECO:0007669"/>
    <property type="project" value="TreeGrafter"/>
</dbReference>
<dbReference type="CDD" id="cd03108">
    <property type="entry name" value="AdSS"/>
    <property type="match status" value="1"/>
</dbReference>
<dbReference type="FunFam" id="1.10.300.10:FF:000001">
    <property type="entry name" value="Adenylosuccinate synthetase"/>
    <property type="match status" value="1"/>
</dbReference>
<dbReference type="FunFam" id="3.90.170.10:FF:000001">
    <property type="entry name" value="Adenylosuccinate synthetase"/>
    <property type="match status" value="1"/>
</dbReference>
<dbReference type="Gene3D" id="3.40.440.10">
    <property type="entry name" value="Adenylosuccinate Synthetase, subunit A, domain 1"/>
    <property type="match status" value="1"/>
</dbReference>
<dbReference type="Gene3D" id="1.10.300.10">
    <property type="entry name" value="Adenylosuccinate Synthetase, subunit A, domain 2"/>
    <property type="match status" value="1"/>
</dbReference>
<dbReference type="Gene3D" id="3.90.170.10">
    <property type="entry name" value="Adenylosuccinate Synthetase, subunit A, domain 3"/>
    <property type="match status" value="1"/>
</dbReference>
<dbReference type="HAMAP" id="MF_00011">
    <property type="entry name" value="Adenylosucc_synth"/>
    <property type="match status" value="1"/>
</dbReference>
<dbReference type="InterPro" id="IPR018220">
    <property type="entry name" value="Adenylosuccin_syn_GTP-bd"/>
</dbReference>
<dbReference type="InterPro" id="IPR033128">
    <property type="entry name" value="Adenylosuccin_syn_Lys_AS"/>
</dbReference>
<dbReference type="InterPro" id="IPR042109">
    <property type="entry name" value="Adenylosuccinate_synth_dom1"/>
</dbReference>
<dbReference type="InterPro" id="IPR042110">
    <property type="entry name" value="Adenylosuccinate_synth_dom2"/>
</dbReference>
<dbReference type="InterPro" id="IPR042111">
    <property type="entry name" value="Adenylosuccinate_synth_dom3"/>
</dbReference>
<dbReference type="InterPro" id="IPR001114">
    <property type="entry name" value="Adenylosuccinate_synthetase"/>
</dbReference>
<dbReference type="InterPro" id="IPR027417">
    <property type="entry name" value="P-loop_NTPase"/>
</dbReference>
<dbReference type="NCBIfam" id="NF002223">
    <property type="entry name" value="PRK01117.1"/>
    <property type="match status" value="1"/>
</dbReference>
<dbReference type="NCBIfam" id="TIGR00184">
    <property type="entry name" value="purA"/>
    <property type="match status" value="1"/>
</dbReference>
<dbReference type="PANTHER" id="PTHR11846">
    <property type="entry name" value="ADENYLOSUCCINATE SYNTHETASE"/>
    <property type="match status" value="1"/>
</dbReference>
<dbReference type="PANTHER" id="PTHR11846:SF0">
    <property type="entry name" value="ADENYLOSUCCINATE SYNTHETASE"/>
    <property type="match status" value="1"/>
</dbReference>
<dbReference type="Pfam" id="PF00709">
    <property type="entry name" value="Adenylsucc_synt"/>
    <property type="match status" value="1"/>
</dbReference>
<dbReference type="SMART" id="SM00788">
    <property type="entry name" value="Adenylsucc_synt"/>
    <property type="match status" value="1"/>
</dbReference>
<dbReference type="SUPFAM" id="SSF52540">
    <property type="entry name" value="P-loop containing nucleoside triphosphate hydrolases"/>
    <property type="match status" value="1"/>
</dbReference>
<dbReference type="PROSITE" id="PS01266">
    <property type="entry name" value="ADENYLOSUCCIN_SYN_1"/>
    <property type="match status" value="1"/>
</dbReference>
<dbReference type="PROSITE" id="PS00513">
    <property type="entry name" value="ADENYLOSUCCIN_SYN_2"/>
    <property type="match status" value="1"/>
</dbReference>
<proteinExistence type="inferred from homology"/>
<reference key="1">
    <citation type="submission" date="2009-01" db="EMBL/GenBank/DDBJ databases">
        <title>Complete sequence of Diaphorobacter sp. TPSY.</title>
        <authorList>
            <consortium name="US DOE Joint Genome Institute"/>
            <person name="Lucas S."/>
            <person name="Copeland A."/>
            <person name="Lapidus A."/>
            <person name="Glavina del Rio T."/>
            <person name="Tice H."/>
            <person name="Bruce D."/>
            <person name="Goodwin L."/>
            <person name="Pitluck S."/>
            <person name="Chertkov O."/>
            <person name="Brettin T."/>
            <person name="Detter J.C."/>
            <person name="Han C."/>
            <person name="Larimer F."/>
            <person name="Land M."/>
            <person name="Hauser L."/>
            <person name="Kyrpides N."/>
            <person name="Mikhailova N."/>
            <person name="Coates J.D."/>
        </authorList>
    </citation>
    <scope>NUCLEOTIDE SEQUENCE [LARGE SCALE GENOMIC DNA]</scope>
    <source>
        <strain>TPSY</strain>
    </source>
</reference>
<protein>
    <recommendedName>
        <fullName evidence="1">Adenylosuccinate synthetase</fullName>
        <shortName evidence="1">AMPSase</shortName>
        <shortName evidence="1">AdSS</shortName>
        <ecNumber evidence="1">6.3.4.4</ecNumber>
    </recommendedName>
    <alternativeName>
        <fullName evidence="1">IMP--aspartate ligase</fullName>
    </alternativeName>
</protein>
<name>PURA_ACIET</name>
<feature type="chain" id="PRO_1000194750" description="Adenylosuccinate synthetase">
    <location>
        <begin position="1"/>
        <end position="458"/>
    </location>
</feature>
<feature type="active site" description="Proton acceptor" evidence="1">
    <location>
        <position position="18"/>
    </location>
</feature>
<feature type="active site" description="Proton donor" evidence="1">
    <location>
        <position position="46"/>
    </location>
</feature>
<feature type="binding site" evidence="1">
    <location>
        <begin position="17"/>
        <end position="23"/>
    </location>
    <ligand>
        <name>GTP</name>
        <dbReference type="ChEBI" id="CHEBI:37565"/>
    </ligand>
</feature>
<feature type="binding site" description="in other chain" evidence="1">
    <location>
        <begin position="18"/>
        <end position="21"/>
    </location>
    <ligand>
        <name>IMP</name>
        <dbReference type="ChEBI" id="CHEBI:58053"/>
        <note>ligand shared between dimeric partners</note>
    </ligand>
</feature>
<feature type="binding site" evidence="1">
    <location>
        <position position="18"/>
    </location>
    <ligand>
        <name>Mg(2+)</name>
        <dbReference type="ChEBI" id="CHEBI:18420"/>
    </ligand>
</feature>
<feature type="binding site" description="in other chain" evidence="1">
    <location>
        <begin position="43"/>
        <end position="46"/>
    </location>
    <ligand>
        <name>IMP</name>
        <dbReference type="ChEBI" id="CHEBI:58053"/>
        <note>ligand shared between dimeric partners</note>
    </ligand>
</feature>
<feature type="binding site" evidence="1">
    <location>
        <begin position="45"/>
        <end position="47"/>
    </location>
    <ligand>
        <name>GTP</name>
        <dbReference type="ChEBI" id="CHEBI:37565"/>
    </ligand>
</feature>
<feature type="binding site" evidence="1">
    <location>
        <position position="45"/>
    </location>
    <ligand>
        <name>Mg(2+)</name>
        <dbReference type="ChEBI" id="CHEBI:18420"/>
    </ligand>
</feature>
<feature type="binding site" description="in other chain" evidence="1">
    <location>
        <position position="137"/>
    </location>
    <ligand>
        <name>IMP</name>
        <dbReference type="ChEBI" id="CHEBI:58053"/>
        <note>ligand shared between dimeric partners</note>
    </ligand>
</feature>
<feature type="binding site" evidence="1">
    <location>
        <position position="151"/>
    </location>
    <ligand>
        <name>IMP</name>
        <dbReference type="ChEBI" id="CHEBI:58053"/>
        <note>ligand shared between dimeric partners</note>
    </ligand>
</feature>
<feature type="binding site" description="in other chain" evidence="1">
    <location>
        <position position="247"/>
    </location>
    <ligand>
        <name>IMP</name>
        <dbReference type="ChEBI" id="CHEBI:58053"/>
        <note>ligand shared between dimeric partners</note>
    </ligand>
</feature>
<feature type="binding site" description="in other chain" evidence="1">
    <location>
        <position position="262"/>
    </location>
    <ligand>
        <name>IMP</name>
        <dbReference type="ChEBI" id="CHEBI:58053"/>
        <note>ligand shared between dimeric partners</note>
    </ligand>
</feature>
<feature type="binding site" evidence="1">
    <location>
        <begin position="326"/>
        <end position="332"/>
    </location>
    <ligand>
        <name>substrate</name>
    </ligand>
</feature>
<feature type="binding site" description="in other chain" evidence="1">
    <location>
        <position position="330"/>
    </location>
    <ligand>
        <name>IMP</name>
        <dbReference type="ChEBI" id="CHEBI:58053"/>
        <note>ligand shared between dimeric partners</note>
    </ligand>
</feature>
<feature type="binding site" evidence="1">
    <location>
        <position position="332"/>
    </location>
    <ligand>
        <name>GTP</name>
        <dbReference type="ChEBI" id="CHEBI:37565"/>
    </ligand>
</feature>
<feature type="binding site" evidence="1">
    <location>
        <begin position="358"/>
        <end position="360"/>
    </location>
    <ligand>
        <name>GTP</name>
        <dbReference type="ChEBI" id="CHEBI:37565"/>
    </ligand>
</feature>
<feature type="binding site" evidence="1">
    <location>
        <begin position="440"/>
        <end position="442"/>
    </location>
    <ligand>
        <name>GTP</name>
        <dbReference type="ChEBI" id="CHEBI:37565"/>
    </ligand>
</feature>
<sequence length="458" mass="49384">MKASKGRNVVVVGTQWGDEGKGKLVDWLTESAQGVVRFQGGHNAGHTLVINGVKTALHLIPSGIMRPGVKCYIGNGVVLSAGKLFEEIEGLEKAGVEVRSRLRVSEACPLILPFHAALDVAREAAREHGGAEKIGTTGRGIGPAYEDKIARRALRVQDLKYPERFAAKLRELLALHNHVLSTFLGSANFQFGDALKPYITGGQVQFEPVFDEAMRHAEMLKPMMADVSRELNEAHAAGANLLFEGAQGTLLDVDHGTYPYVTSSNCVAGNAAAGSGVGPGHLHYILGITKAYCTRVGGGPFPTELDWETPGTPGYHMSTVGAEKGVTTGRSRRCGWFDAALLKRSAQVNGLSGLCITKLDVLDGLRELSLCVGYELDGERIDLLPMGAEEIARCVPIYENIAGWTESTVGVTRYEDLPSNARRYLERIEQVTGVPIAMISTSPDRDHTILMRHPYAAD</sequence>
<accession>B9MFY7</accession>
<gene>
    <name evidence="1" type="primary">purA</name>
    <name type="ordered locus">Dtpsy_1101</name>
</gene>
<organism>
    <name type="scientific">Acidovorax ebreus (strain TPSY)</name>
    <name type="common">Diaphorobacter sp. (strain TPSY)</name>
    <dbReference type="NCBI Taxonomy" id="535289"/>
    <lineage>
        <taxon>Bacteria</taxon>
        <taxon>Pseudomonadati</taxon>
        <taxon>Pseudomonadota</taxon>
        <taxon>Betaproteobacteria</taxon>
        <taxon>Burkholderiales</taxon>
        <taxon>Comamonadaceae</taxon>
        <taxon>Diaphorobacter</taxon>
    </lineage>
</organism>
<comment type="function">
    <text evidence="1">Plays an important role in the de novo pathway of purine nucleotide biosynthesis. Catalyzes the first committed step in the biosynthesis of AMP from IMP.</text>
</comment>
<comment type="catalytic activity">
    <reaction evidence="1">
        <text>IMP + L-aspartate + GTP = N(6)-(1,2-dicarboxyethyl)-AMP + GDP + phosphate + 2 H(+)</text>
        <dbReference type="Rhea" id="RHEA:15753"/>
        <dbReference type="ChEBI" id="CHEBI:15378"/>
        <dbReference type="ChEBI" id="CHEBI:29991"/>
        <dbReference type="ChEBI" id="CHEBI:37565"/>
        <dbReference type="ChEBI" id="CHEBI:43474"/>
        <dbReference type="ChEBI" id="CHEBI:57567"/>
        <dbReference type="ChEBI" id="CHEBI:58053"/>
        <dbReference type="ChEBI" id="CHEBI:58189"/>
        <dbReference type="EC" id="6.3.4.4"/>
    </reaction>
</comment>
<comment type="cofactor">
    <cofactor evidence="1">
        <name>Mg(2+)</name>
        <dbReference type="ChEBI" id="CHEBI:18420"/>
    </cofactor>
    <text evidence="1">Binds 1 Mg(2+) ion per subunit.</text>
</comment>
<comment type="pathway">
    <text evidence="1">Purine metabolism; AMP biosynthesis via de novo pathway; AMP from IMP: step 1/2.</text>
</comment>
<comment type="subunit">
    <text evidence="1">Homodimer.</text>
</comment>
<comment type="subcellular location">
    <subcellularLocation>
        <location evidence="1">Cytoplasm</location>
    </subcellularLocation>
</comment>
<comment type="similarity">
    <text evidence="1">Belongs to the adenylosuccinate synthetase family.</text>
</comment>
<keyword id="KW-0963">Cytoplasm</keyword>
<keyword id="KW-0342">GTP-binding</keyword>
<keyword id="KW-0436">Ligase</keyword>
<keyword id="KW-0460">Magnesium</keyword>
<keyword id="KW-0479">Metal-binding</keyword>
<keyword id="KW-0547">Nucleotide-binding</keyword>
<keyword id="KW-0658">Purine biosynthesis</keyword>
<keyword id="KW-1185">Reference proteome</keyword>
<evidence type="ECO:0000255" key="1">
    <source>
        <dbReference type="HAMAP-Rule" id="MF_00011"/>
    </source>
</evidence>